<sequence length="426" mass="48570">MLDAKYVKDNLQQVAEKLATRGYQFDIAEFEAQEQKRKHLQERTQDLQSQRNTISKEIGQKKAKGEDTSDIFAKVNQINEELKIIEKELKDLQDTINQTLLSMPNLPADDVPVGKDENDNVEIRRWGTPREFHPEAPAKDHSDIGEILKMIDFKAAAKVTGSRFMVLKNKIAKLHRALSQFMLDLHTEKHGYEELYVPYLVNNDSLYGTGQLPKFAANLFKLEGDFEYSLIPTAEVPITNLVRDEILDTETLPRYYTAHTPCFRSEAGSYGRDTKGMIRQHQFEKVELVHITTADKGEESLELLTSHAEKVLQKLNLPYRVMKLCTGDMGFSAKKTYDLEVWLPSQNTYREISSCSWCGDFQARRMKARHKNPSMKKPELVHTLNGSGLAVGRTLLAIIENYQQEDGSIMVPDALIKYMGGISVIK</sequence>
<dbReference type="EC" id="6.1.1.11" evidence="1"/>
<dbReference type="EMBL" id="CP000437">
    <property type="protein sequence ID" value="ABI83257.1"/>
    <property type="molecule type" value="Genomic_DNA"/>
</dbReference>
<dbReference type="RefSeq" id="WP_003016800.1">
    <property type="nucleotide sequence ID" value="NC_017463.1"/>
</dbReference>
<dbReference type="SMR" id="Q0BKX7"/>
<dbReference type="KEGG" id="fth:FTH_1445"/>
<dbReference type="UniPathway" id="UPA00906">
    <property type="reaction ID" value="UER00895"/>
</dbReference>
<dbReference type="GO" id="GO:0005737">
    <property type="term" value="C:cytoplasm"/>
    <property type="evidence" value="ECO:0007669"/>
    <property type="project" value="UniProtKB-SubCell"/>
</dbReference>
<dbReference type="GO" id="GO:0005524">
    <property type="term" value="F:ATP binding"/>
    <property type="evidence" value="ECO:0007669"/>
    <property type="project" value="UniProtKB-UniRule"/>
</dbReference>
<dbReference type="GO" id="GO:0004828">
    <property type="term" value="F:serine-tRNA ligase activity"/>
    <property type="evidence" value="ECO:0007669"/>
    <property type="project" value="UniProtKB-UniRule"/>
</dbReference>
<dbReference type="GO" id="GO:0016260">
    <property type="term" value="P:selenocysteine biosynthetic process"/>
    <property type="evidence" value="ECO:0007669"/>
    <property type="project" value="UniProtKB-UniRule"/>
</dbReference>
<dbReference type="GO" id="GO:0006434">
    <property type="term" value="P:seryl-tRNA aminoacylation"/>
    <property type="evidence" value="ECO:0007669"/>
    <property type="project" value="UniProtKB-UniRule"/>
</dbReference>
<dbReference type="CDD" id="cd00770">
    <property type="entry name" value="SerRS_core"/>
    <property type="match status" value="1"/>
</dbReference>
<dbReference type="Gene3D" id="3.30.930.10">
    <property type="entry name" value="Bira Bifunctional Protein, Domain 2"/>
    <property type="match status" value="1"/>
</dbReference>
<dbReference type="Gene3D" id="1.10.287.40">
    <property type="entry name" value="Serine-tRNA synthetase, tRNA binding domain"/>
    <property type="match status" value="1"/>
</dbReference>
<dbReference type="HAMAP" id="MF_00176">
    <property type="entry name" value="Ser_tRNA_synth_type1"/>
    <property type="match status" value="1"/>
</dbReference>
<dbReference type="InterPro" id="IPR002314">
    <property type="entry name" value="aa-tRNA-synt_IIb"/>
</dbReference>
<dbReference type="InterPro" id="IPR006195">
    <property type="entry name" value="aa-tRNA-synth_II"/>
</dbReference>
<dbReference type="InterPro" id="IPR045864">
    <property type="entry name" value="aa-tRNA-synth_II/BPL/LPL"/>
</dbReference>
<dbReference type="InterPro" id="IPR002317">
    <property type="entry name" value="Ser-tRNA-ligase_type_1"/>
</dbReference>
<dbReference type="InterPro" id="IPR015866">
    <property type="entry name" value="Ser-tRNA-synth_1_N"/>
</dbReference>
<dbReference type="InterPro" id="IPR042103">
    <property type="entry name" value="SerRS_1_N_sf"/>
</dbReference>
<dbReference type="InterPro" id="IPR033729">
    <property type="entry name" value="SerRS_core"/>
</dbReference>
<dbReference type="InterPro" id="IPR010978">
    <property type="entry name" value="tRNA-bd_arm"/>
</dbReference>
<dbReference type="NCBIfam" id="TIGR00414">
    <property type="entry name" value="serS"/>
    <property type="match status" value="1"/>
</dbReference>
<dbReference type="PANTHER" id="PTHR43697:SF1">
    <property type="entry name" value="SERINE--TRNA LIGASE"/>
    <property type="match status" value="1"/>
</dbReference>
<dbReference type="PANTHER" id="PTHR43697">
    <property type="entry name" value="SERYL-TRNA SYNTHETASE"/>
    <property type="match status" value="1"/>
</dbReference>
<dbReference type="Pfam" id="PF02403">
    <property type="entry name" value="Seryl_tRNA_N"/>
    <property type="match status" value="1"/>
</dbReference>
<dbReference type="Pfam" id="PF00587">
    <property type="entry name" value="tRNA-synt_2b"/>
    <property type="match status" value="1"/>
</dbReference>
<dbReference type="PIRSF" id="PIRSF001529">
    <property type="entry name" value="Ser-tRNA-synth_IIa"/>
    <property type="match status" value="1"/>
</dbReference>
<dbReference type="PRINTS" id="PR00981">
    <property type="entry name" value="TRNASYNTHSER"/>
</dbReference>
<dbReference type="SUPFAM" id="SSF55681">
    <property type="entry name" value="Class II aaRS and biotin synthetases"/>
    <property type="match status" value="1"/>
</dbReference>
<dbReference type="SUPFAM" id="SSF46589">
    <property type="entry name" value="tRNA-binding arm"/>
    <property type="match status" value="1"/>
</dbReference>
<dbReference type="PROSITE" id="PS50862">
    <property type="entry name" value="AA_TRNA_LIGASE_II"/>
    <property type="match status" value="1"/>
</dbReference>
<organism>
    <name type="scientific">Francisella tularensis subsp. holarctica (strain OSU18)</name>
    <dbReference type="NCBI Taxonomy" id="393011"/>
    <lineage>
        <taxon>Bacteria</taxon>
        <taxon>Pseudomonadati</taxon>
        <taxon>Pseudomonadota</taxon>
        <taxon>Gammaproteobacteria</taxon>
        <taxon>Thiotrichales</taxon>
        <taxon>Francisellaceae</taxon>
        <taxon>Francisella</taxon>
    </lineage>
</organism>
<keyword id="KW-0030">Aminoacyl-tRNA synthetase</keyword>
<keyword id="KW-0067">ATP-binding</keyword>
<keyword id="KW-0963">Cytoplasm</keyword>
<keyword id="KW-0436">Ligase</keyword>
<keyword id="KW-0547">Nucleotide-binding</keyword>
<keyword id="KW-0648">Protein biosynthesis</keyword>
<name>SYS_FRATO</name>
<gene>
    <name evidence="1" type="primary">serS</name>
    <name type="ordered locus">FTH_1445</name>
</gene>
<feature type="chain" id="PRO_1000019685" description="Serine--tRNA ligase">
    <location>
        <begin position="1"/>
        <end position="426"/>
    </location>
</feature>
<feature type="region of interest" description="Disordered" evidence="2">
    <location>
        <begin position="36"/>
        <end position="66"/>
    </location>
</feature>
<feature type="compositionally biased region" description="Polar residues" evidence="2">
    <location>
        <begin position="46"/>
        <end position="55"/>
    </location>
</feature>
<feature type="binding site" evidence="1">
    <location>
        <begin position="233"/>
        <end position="235"/>
    </location>
    <ligand>
        <name>L-serine</name>
        <dbReference type="ChEBI" id="CHEBI:33384"/>
    </ligand>
</feature>
<feature type="binding site" evidence="1">
    <location>
        <begin position="264"/>
        <end position="266"/>
    </location>
    <ligand>
        <name>ATP</name>
        <dbReference type="ChEBI" id="CHEBI:30616"/>
    </ligand>
</feature>
<feature type="binding site" evidence="1">
    <location>
        <position position="287"/>
    </location>
    <ligand>
        <name>L-serine</name>
        <dbReference type="ChEBI" id="CHEBI:33384"/>
    </ligand>
</feature>
<feature type="binding site" evidence="1">
    <location>
        <begin position="351"/>
        <end position="354"/>
    </location>
    <ligand>
        <name>ATP</name>
        <dbReference type="ChEBI" id="CHEBI:30616"/>
    </ligand>
</feature>
<feature type="binding site" evidence="1">
    <location>
        <position position="387"/>
    </location>
    <ligand>
        <name>L-serine</name>
        <dbReference type="ChEBI" id="CHEBI:33384"/>
    </ligand>
</feature>
<protein>
    <recommendedName>
        <fullName evidence="1">Serine--tRNA ligase</fullName>
        <ecNumber evidence="1">6.1.1.11</ecNumber>
    </recommendedName>
    <alternativeName>
        <fullName evidence="1">Seryl-tRNA synthetase</fullName>
        <shortName evidence="1">SerRS</shortName>
    </alternativeName>
    <alternativeName>
        <fullName evidence="1">Seryl-tRNA(Ser/Sec) synthetase</fullName>
    </alternativeName>
</protein>
<comment type="function">
    <text evidence="1">Catalyzes the attachment of serine to tRNA(Ser). Is also able to aminoacylate tRNA(Sec) with serine, to form the misacylated tRNA L-seryl-tRNA(Sec), which will be further converted into selenocysteinyl-tRNA(Sec).</text>
</comment>
<comment type="catalytic activity">
    <reaction evidence="1">
        <text>tRNA(Ser) + L-serine + ATP = L-seryl-tRNA(Ser) + AMP + diphosphate + H(+)</text>
        <dbReference type="Rhea" id="RHEA:12292"/>
        <dbReference type="Rhea" id="RHEA-COMP:9669"/>
        <dbReference type="Rhea" id="RHEA-COMP:9703"/>
        <dbReference type="ChEBI" id="CHEBI:15378"/>
        <dbReference type="ChEBI" id="CHEBI:30616"/>
        <dbReference type="ChEBI" id="CHEBI:33019"/>
        <dbReference type="ChEBI" id="CHEBI:33384"/>
        <dbReference type="ChEBI" id="CHEBI:78442"/>
        <dbReference type="ChEBI" id="CHEBI:78533"/>
        <dbReference type="ChEBI" id="CHEBI:456215"/>
        <dbReference type="EC" id="6.1.1.11"/>
    </reaction>
</comment>
<comment type="catalytic activity">
    <reaction evidence="1">
        <text>tRNA(Sec) + L-serine + ATP = L-seryl-tRNA(Sec) + AMP + diphosphate + H(+)</text>
        <dbReference type="Rhea" id="RHEA:42580"/>
        <dbReference type="Rhea" id="RHEA-COMP:9742"/>
        <dbReference type="Rhea" id="RHEA-COMP:10128"/>
        <dbReference type="ChEBI" id="CHEBI:15378"/>
        <dbReference type="ChEBI" id="CHEBI:30616"/>
        <dbReference type="ChEBI" id="CHEBI:33019"/>
        <dbReference type="ChEBI" id="CHEBI:33384"/>
        <dbReference type="ChEBI" id="CHEBI:78442"/>
        <dbReference type="ChEBI" id="CHEBI:78533"/>
        <dbReference type="ChEBI" id="CHEBI:456215"/>
        <dbReference type="EC" id="6.1.1.11"/>
    </reaction>
</comment>
<comment type="pathway">
    <text evidence="1">Aminoacyl-tRNA biosynthesis; selenocysteinyl-tRNA(Sec) biosynthesis; L-seryl-tRNA(Sec) from L-serine and tRNA(Sec): step 1/1.</text>
</comment>
<comment type="subunit">
    <text evidence="1">Homodimer. The tRNA molecule binds across the dimer.</text>
</comment>
<comment type="subcellular location">
    <subcellularLocation>
        <location evidence="1">Cytoplasm</location>
    </subcellularLocation>
</comment>
<comment type="domain">
    <text evidence="1">Consists of two distinct domains, a catalytic core and a N-terminal extension that is involved in tRNA binding.</text>
</comment>
<comment type="similarity">
    <text evidence="1">Belongs to the class-II aminoacyl-tRNA synthetase family. Type-1 seryl-tRNA synthetase subfamily.</text>
</comment>
<evidence type="ECO:0000255" key="1">
    <source>
        <dbReference type="HAMAP-Rule" id="MF_00176"/>
    </source>
</evidence>
<evidence type="ECO:0000256" key="2">
    <source>
        <dbReference type="SAM" id="MobiDB-lite"/>
    </source>
</evidence>
<reference key="1">
    <citation type="journal article" date="2006" name="J. Bacteriol.">
        <title>Chromosome rearrangement and diversification of Francisella tularensis revealed by the type B (OSU18) genome sequence.</title>
        <authorList>
            <person name="Petrosino J.F."/>
            <person name="Xiang Q."/>
            <person name="Karpathy S.E."/>
            <person name="Jiang H."/>
            <person name="Yerrapragada S."/>
            <person name="Liu Y."/>
            <person name="Gioia J."/>
            <person name="Hemphill L."/>
            <person name="Gonzalez A."/>
            <person name="Raghavan T.M."/>
            <person name="Uzman A."/>
            <person name="Fox G.E."/>
            <person name="Highlander S."/>
            <person name="Reichard M."/>
            <person name="Morton R.J."/>
            <person name="Clinkenbeard K.D."/>
            <person name="Weinstock G.M."/>
        </authorList>
    </citation>
    <scope>NUCLEOTIDE SEQUENCE [LARGE SCALE GENOMIC DNA]</scope>
    <source>
        <strain>OSU18</strain>
    </source>
</reference>
<proteinExistence type="inferred from homology"/>
<accession>Q0BKX7</accession>